<organism>
    <name type="scientific">Papaver somniferum</name>
    <name type="common">Opium poppy</name>
    <dbReference type="NCBI Taxonomy" id="3469"/>
    <lineage>
        <taxon>Eukaryota</taxon>
        <taxon>Viridiplantae</taxon>
        <taxon>Streptophyta</taxon>
        <taxon>Embryophyta</taxon>
        <taxon>Tracheophyta</taxon>
        <taxon>Spermatophyta</taxon>
        <taxon>Magnoliopsida</taxon>
        <taxon>Ranunculales</taxon>
        <taxon>Papaveraceae</taxon>
        <taxon>Papaveroideae</taxon>
        <taxon>Papaver</taxon>
    </lineage>
</organism>
<proteinExistence type="evidence at protein level"/>
<evidence type="ECO:0000269" key="1">
    <source>
    </source>
</evidence>
<evidence type="ECO:0000269" key="2">
    <source>
    </source>
</evidence>
<evidence type="ECO:0000303" key="3">
    <source>
    </source>
</evidence>
<evidence type="ECO:0000305" key="4"/>
<evidence type="ECO:0007744" key="5">
    <source>
        <dbReference type="PDB" id="6KA3"/>
    </source>
</evidence>
<evidence type="ECO:0007829" key="6">
    <source>
        <dbReference type="PDB" id="6KA3"/>
    </source>
</evidence>
<comment type="function">
    <text evidence="1">Catalyzes the formation of thebaine from (7S)-salutaridinol 7-O-acetate at the expense of labile hydroxylated by-products, which are preferentially produced by spontaneous allylic elimination. No visible activity toward (7S)-salutaridinol (at pH 7).</text>
</comment>
<comment type="catalytic activity">
    <reaction evidence="1">
        <text>(7S)-O-acetylsalutaridinol = thebaine + acetate + H(+)</text>
        <dbReference type="Rhea" id="RHEA:56908"/>
        <dbReference type="ChEBI" id="CHEBI:15378"/>
        <dbReference type="ChEBI" id="CHEBI:30089"/>
        <dbReference type="ChEBI" id="CHEBI:57672"/>
        <dbReference type="ChEBI" id="CHEBI:59953"/>
        <dbReference type="EC" id="4.2.99.24"/>
    </reaction>
    <physiologicalReaction direction="left-to-right" evidence="1">
        <dbReference type="Rhea" id="RHEA:56909"/>
    </physiologicalReaction>
</comment>
<comment type="activity regulation">
    <text evidence="1">Slightly inhibited by salutaridine and (7S)-salutaridinol.</text>
</comment>
<comment type="biophysicochemical properties">
    <kinetics>
        <Vmax evidence="1">3.2 nmol/min/ug enzyme</Vmax>
    </kinetics>
    <phDependence>
        <text evidence="1">Optimum pH is 8.</text>
    </phDependence>
</comment>
<comment type="pathway">
    <text evidence="1">Alkaloid biosynthesis; morphine biosynthesis.</text>
</comment>
<comment type="subunit">
    <text evidence="1">Homodimer (allosteric) and oligomers.</text>
</comment>
<comment type="tissue specificity">
    <text evidence="1">Expressed in poppy latex.</text>
</comment>
<comment type="disruption phenotype">
    <text evidence="1">Plants lacking both THS1 and THS2 exhibit reduced thebaine levels but accumulation of the upstream intermediates salutaridinol and reticuline.</text>
</comment>
<comment type="biotechnology">
    <text evidence="1">Can be used to improve thebaine yield in engineered yeast.</text>
</comment>
<comment type="similarity">
    <text evidence="4">Belongs to the MLP family.</text>
</comment>
<accession>A0A2U9GGW3</accession>
<reference key="1">
    <citation type="journal article" date="2018" name="Nat. Chem. Biol.">
        <title>A pathogenesis-related 10 protein catalyzes the final step in thebaine biosynthesis.</title>
        <authorList>
            <person name="Chen X."/>
            <person name="Hagel J.M."/>
            <person name="Chang L."/>
            <person name="Tucker J.E."/>
            <person name="Shiigi S.A."/>
            <person name="Yelpaala Y."/>
            <person name="Chen H.-Y."/>
            <person name="Estrada R."/>
            <person name="Colbeck J."/>
            <person name="Enquist-Newman M."/>
            <person name="Ibanez A.B."/>
            <person name="Cottarel G."/>
            <person name="Vidanes G.M."/>
            <person name="Facchini P.J."/>
        </authorList>
    </citation>
    <scope>NUCLEOTIDE SEQUENCE [MRNA]</scope>
    <scope>FUNCTION</scope>
    <scope>DISRUPTION PHENOTYPE</scope>
    <scope>CATALYTIC ACTIVITY</scope>
    <scope>PATHWAY</scope>
    <scope>TISSUE SPECIFICITY</scope>
    <scope>SUBUNIT</scope>
    <scope>BIOPHYSICOCHEMICAL PROPERTIES</scope>
    <scope>ACTIVITY REGULATION</scope>
    <scope>BIOTECHNOLOGY</scope>
    <source>
        <tissue>Latex</tissue>
    </source>
</reference>
<reference key="2">
    <citation type="journal article" date="2020" name="Biochem. Biophys. Res. Commun.">
        <title>Structural insights into thebaine synthase 2 catalysis.</title>
        <authorList>
            <person name="Chen C.C."/>
            <person name="Xue J."/>
            <person name="Peng W."/>
            <person name="Wang B."/>
            <person name="Zhang L."/>
            <person name="Liu W."/>
            <person name="Ko T.P."/>
            <person name="Huang J.W."/>
            <person name="Zhou S."/>
            <person name="Min J."/>
            <person name="Ma L."/>
            <person name="Dai L."/>
            <person name="Guo R.T."/>
            <person name="Yu X."/>
        </authorList>
    </citation>
    <scope>X-RAY CRYSTALLOGRAPHY (1.95 ANGSTROMS) IN COMPLEX WITH THEBAINE</scope>
    <scope>ACTIVE SITE</scope>
</reference>
<gene>
    <name evidence="3" type="primary">THS2</name>
</gene>
<feature type="chain" id="PRO_0000446002" description="Thebaine synthase 2">
    <location>
        <begin position="1"/>
        <end position="160"/>
    </location>
</feature>
<feature type="active site" description="Proton acceptor" evidence="2 5">
    <location>
        <position position="89"/>
    </location>
</feature>
<feature type="binding site" evidence="2 5">
    <location>
        <position position="74"/>
    </location>
    <ligand>
        <name>thebaine</name>
        <dbReference type="ChEBI" id="CHEBI:59953"/>
    </ligand>
</feature>
<feature type="binding site" evidence="2 5">
    <location>
        <position position="105"/>
    </location>
    <ligand>
        <name>thebaine</name>
        <dbReference type="ChEBI" id="CHEBI:59953"/>
    </ligand>
</feature>
<feature type="strand" evidence="6">
    <location>
        <begin position="9"/>
        <end position="21"/>
    </location>
</feature>
<feature type="helix" evidence="6">
    <location>
        <begin position="23"/>
        <end position="31"/>
    </location>
</feature>
<feature type="helix" evidence="6">
    <location>
        <begin position="33"/>
        <end position="39"/>
    </location>
</feature>
<feature type="turn" evidence="6">
    <location>
        <begin position="41"/>
        <end position="43"/>
    </location>
</feature>
<feature type="strand" evidence="6">
    <location>
        <begin position="44"/>
        <end position="52"/>
    </location>
</feature>
<feature type="strand" evidence="6">
    <location>
        <begin position="59"/>
        <end position="67"/>
    </location>
</feature>
<feature type="strand" evidence="6">
    <location>
        <begin position="70"/>
        <end position="81"/>
    </location>
</feature>
<feature type="turn" evidence="6">
    <location>
        <begin position="82"/>
        <end position="85"/>
    </location>
</feature>
<feature type="strand" evidence="6">
    <location>
        <begin position="86"/>
        <end position="94"/>
    </location>
</feature>
<feature type="helix" evidence="6">
    <location>
        <begin position="95"/>
        <end position="98"/>
    </location>
</feature>
<feature type="strand" evidence="6">
    <location>
        <begin position="100"/>
        <end position="111"/>
    </location>
</feature>
<feature type="strand" evidence="6">
    <location>
        <begin position="115"/>
        <end position="130"/>
    </location>
</feature>
<feature type="helix" evidence="6">
    <location>
        <begin position="137"/>
        <end position="155"/>
    </location>
</feature>
<dbReference type="EC" id="4.2.99.24" evidence="1"/>
<dbReference type="EMBL" id="MH011343">
    <property type="protein sequence ID" value="AWQ63980.1"/>
    <property type="molecule type" value="mRNA"/>
</dbReference>
<dbReference type="PDB" id="6KA2">
    <property type="method" value="X-ray"/>
    <property type="resolution" value="2.35 A"/>
    <property type="chains" value="A/B/C/D=1-160"/>
</dbReference>
<dbReference type="PDB" id="6KA3">
    <property type="method" value="X-ray"/>
    <property type="resolution" value="1.95 A"/>
    <property type="chains" value="A/B/C/D=1-160"/>
</dbReference>
<dbReference type="PDBsum" id="6KA2"/>
<dbReference type="PDBsum" id="6KA3"/>
<dbReference type="SMR" id="A0A2U9GGW3"/>
<dbReference type="EnsemblPlants" id="RZC84754">
    <property type="protein sequence ID" value="RZC84754"/>
    <property type="gene ID" value="C5167_047537"/>
</dbReference>
<dbReference type="Gramene" id="RZC84754">
    <property type="protein sequence ID" value="RZC84754"/>
    <property type="gene ID" value="C5167_047537"/>
</dbReference>
<dbReference type="OMA" id="FKERIEM"/>
<dbReference type="OrthoDB" id="1501595at2759"/>
<dbReference type="BioCyc" id="MetaCyc:MONOMER-20778"/>
<dbReference type="BRENDA" id="4.2.99.24">
    <property type="organism ID" value="4515"/>
</dbReference>
<dbReference type="SABIO-RK" id="A0A2U9GGW3"/>
<dbReference type="UniPathway" id="UPA00852"/>
<dbReference type="GO" id="GO:0016835">
    <property type="term" value="F:carbon-oxygen lyase activity"/>
    <property type="evidence" value="ECO:0000315"/>
    <property type="project" value="UniProtKB"/>
</dbReference>
<dbReference type="GO" id="GO:0042803">
    <property type="term" value="F:protein homodimerization activity"/>
    <property type="evidence" value="ECO:0000314"/>
    <property type="project" value="UniProtKB"/>
</dbReference>
<dbReference type="GO" id="GO:0009820">
    <property type="term" value="P:alkaloid metabolic process"/>
    <property type="evidence" value="ECO:0000315"/>
    <property type="project" value="UniProtKB"/>
</dbReference>
<dbReference type="GO" id="GO:0006952">
    <property type="term" value="P:defense response"/>
    <property type="evidence" value="ECO:0007669"/>
    <property type="project" value="InterPro"/>
</dbReference>
<dbReference type="FunFam" id="3.30.530.20:FF:000118">
    <property type="entry name" value="Thebaine synthase 1"/>
    <property type="match status" value="1"/>
</dbReference>
<dbReference type="Gene3D" id="3.30.530.20">
    <property type="match status" value="1"/>
</dbReference>
<dbReference type="InterPro" id="IPR000916">
    <property type="entry name" value="Bet_v_I/MLP"/>
</dbReference>
<dbReference type="InterPro" id="IPR052006">
    <property type="entry name" value="MLP-like"/>
</dbReference>
<dbReference type="InterPro" id="IPR023393">
    <property type="entry name" value="START-like_dom_sf"/>
</dbReference>
<dbReference type="PANTHER" id="PTHR31338">
    <property type="entry name" value="POLYKETIDE CYCLASE/DEHYDRASE AND LIPID TRANSPORT SUPERFAMILY PROTEIN"/>
    <property type="match status" value="1"/>
</dbReference>
<dbReference type="PANTHER" id="PTHR31338:SF16">
    <property type="entry name" value="POLYKETIDE CYCLASE_DEHYDRASE AND LIPID TRANSPORT SUPERFAMILY PROTEIN"/>
    <property type="match status" value="1"/>
</dbReference>
<dbReference type="Pfam" id="PF00407">
    <property type="entry name" value="Bet_v_1"/>
    <property type="match status" value="1"/>
</dbReference>
<dbReference type="SMART" id="SM01037">
    <property type="entry name" value="Bet_v_1"/>
    <property type="match status" value="1"/>
</dbReference>
<dbReference type="SUPFAM" id="SSF55961">
    <property type="entry name" value="Bet v1-like"/>
    <property type="match status" value="1"/>
</dbReference>
<keyword id="KW-0002">3D-structure</keyword>
<keyword id="KW-0017">Alkaloid metabolism</keyword>
<keyword id="KW-0456">Lyase</keyword>
<protein>
    <recommendedName>
        <fullName evidence="3">Thebaine synthase 2</fullName>
        <ecNumber evidence="1">4.2.99.24</ecNumber>
    </recommendedName>
</protein>
<sequence>MAPLGVSGLVGKLSTELEVDCDAEKYYNMYKHGEDVKKAVPHLCVDVKIISGDPTSSGCIKEWNVNIDGKTIRSVEETTHDDETKTLRHRVFEGDVMKDFKKFDTIMVVNPKPDGNGCVVTRSIEYEKTNENSPTPFDYLQFGHQAIEDMNKYLRDSESN</sequence>
<name>THS2_PAPSO</name>